<protein>
    <recommendedName>
        <fullName evidence="1">5-methyltetrahydropteroyltriglutamate--homocysteine methyltransferase</fullName>
        <ecNumber evidence="1">2.1.1.14</ecNumber>
    </recommendedName>
    <alternativeName>
        <fullName evidence="1">Cobalamin-independent methionine synthase</fullName>
    </alternativeName>
    <alternativeName>
        <fullName evidence="1">Methionine synthase, vitamin-B12 independent isozyme</fullName>
    </alternativeName>
</protein>
<dbReference type="EC" id="2.1.1.14" evidence="1"/>
<dbReference type="EMBL" id="CP000560">
    <property type="protein sequence ID" value="ABS73667.1"/>
    <property type="molecule type" value="Genomic_DNA"/>
</dbReference>
<dbReference type="RefSeq" id="WP_012117393.1">
    <property type="nucleotide sequence ID" value="NC_009725.2"/>
</dbReference>
<dbReference type="SMR" id="A7Z3U1"/>
<dbReference type="GeneID" id="93080439"/>
<dbReference type="KEGG" id="bay:RBAM_013040"/>
<dbReference type="HOGENOM" id="CLU_013175_0_0_9"/>
<dbReference type="UniPathway" id="UPA00051">
    <property type="reaction ID" value="UER00082"/>
</dbReference>
<dbReference type="Proteomes" id="UP000001120">
    <property type="component" value="Chromosome"/>
</dbReference>
<dbReference type="GO" id="GO:0003871">
    <property type="term" value="F:5-methyltetrahydropteroyltriglutamate-homocysteine S-methyltransferase activity"/>
    <property type="evidence" value="ECO:0007669"/>
    <property type="project" value="UniProtKB-UniRule"/>
</dbReference>
<dbReference type="GO" id="GO:0008270">
    <property type="term" value="F:zinc ion binding"/>
    <property type="evidence" value="ECO:0007669"/>
    <property type="project" value="InterPro"/>
</dbReference>
<dbReference type="GO" id="GO:0009086">
    <property type="term" value="P:methionine biosynthetic process"/>
    <property type="evidence" value="ECO:0007669"/>
    <property type="project" value="UniProtKB-UniRule"/>
</dbReference>
<dbReference type="GO" id="GO:0032259">
    <property type="term" value="P:methylation"/>
    <property type="evidence" value="ECO:0007669"/>
    <property type="project" value="UniProtKB-KW"/>
</dbReference>
<dbReference type="CDD" id="cd03311">
    <property type="entry name" value="CIMS_C_terminal_like"/>
    <property type="match status" value="1"/>
</dbReference>
<dbReference type="CDD" id="cd03312">
    <property type="entry name" value="CIMS_N_terminal_like"/>
    <property type="match status" value="1"/>
</dbReference>
<dbReference type="Gene3D" id="3.20.20.210">
    <property type="match status" value="2"/>
</dbReference>
<dbReference type="HAMAP" id="MF_00172">
    <property type="entry name" value="Meth_synth"/>
    <property type="match status" value="1"/>
</dbReference>
<dbReference type="InterPro" id="IPR013215">
    <property type="entry name" value="Cbl-indep_Met_Synth_N"/>
</dbReference>
<dbReference type="InterPro" id="IPR006276">
    <property type="entry name" value="Cobalamin-indep_Met_synthase"/>
</dbReference>
<dbReference type="InterPro" id="IPR002629">
    <property type="entry name" value="Met_Synth_C/arc"/>
</dbReference>
<dbReference type="InterPro" id="IPR038071">
    <property type="entry name" value="UROD/MetE-like_sf"/>
</dbReference>
<dbReference type="NCBIfam" id="TIGR01371">
    <property type="entry name" value="met_syn_B12ind"/>
    <property type="match status" value="1"/>
</dbReference>
<dbReference type="NCBIfam" id="NF003556">
    <property type="entry name" value="PRK05222.1"/>
    <property type="match status" value="1"/>
</dbReference>
<dbReference type="PANTHER" id="PTHR30519">
    <property type="entry name" value="5-METHYLTETRAHYDROPTEROYLTRIGLUTAMATE--HOMOCYSTEINE METHYLTRANSFERASE"/>
    <property type="match status" value="1"/>
</dbReference>
<dbReference type="Pfam" id="PF08267">
    <property type="entry name" value="Meth_synt_1"/>
    <property type="match status" value="1"/>
</dbReference>
<dbReference type="Pfam" id="PF01717">
    <property type="entry name" value="Meth_synt_2"/>
    <property type="match status" value="1"/>
</dbReference>
<dbReference type="PIRSF" id="PIRSF000382">
    <property type="entry name" value="MeTrfase_B12_ind"/>
    <property type="match status" value="1"/>
</dbReference>
<dbReference type="SUPFAM" id="SSF51726">
    <property type="entry name" value="UROD/MetE-like"/>
    <property type="match status" value="2"/>
</dbReference>
<evidence type="ECO:0000255" key="1">
    <source>
        <dbReference type="HAMAP-Rule" id="MF_00172"/>
    </source>
</evidence>
<keyword id="KW-0028">Amino-acid biosynthesis</keyword>
<keyword id="KW-0479">Metal-binding</keyword>
<keyword id="KW-0486">Methionine biosynthesis</keyword>
<keyword id="KW-0489">Methyltransferase</keyword>
<keyword id="KW-0677">Repeat</keyword>
<keyword id="KW-0808">Transferase</keyword>
<keyword id="KW-0862">Zinc</keyword>
<comment type="function">
    <text evidence="1">Catalyzes the transfer of a methyl group from 5-methyltetrahydrofolate to homocysteine resulting in methionine formation.</text>
</comment>
<comment type="catalytic activity">
    <reaction evidence="1">
        <text>5-methyltetrahydropteroyltri-L-glutamate + L-homocysteine = tetrahydropteroyltri-L-glutamate + L-methionine</text>
        <dbReference type="Rhea" id="RHEA:21196"/>
        <dbReference type="ChEBI" id="CHEBI:57844"/>
        <dbReference type="ChEBI" id="CHEBI:58140"/>
        <dbReference type="ChEBI" id="CHEBI:58199"/>
        <dbReference type="ChEBI" id="CHEBI:58207"/>
        <dbReference type="EC" id="2.1.1.14"/>
    </reaction>
</comment>
<comment type="cofactor">
    <cofactor evidence="1">
        <name>Zn(2+)</name>
        <dbReference type="ChEBI" id="CHEBI:29105"/>
    </cofactor>
    <text evidence="1">Binds 1 zinc ion per subunit.</text>
</comment>
<comment type="pathway">
    <text evidence="1">Amino-acid biosynthesis; L-methionine biosynthesis via de novo pathway; L-methionine from L-homocysteine (MetE route): step 1/1.</text>
</comment>
<comment type="similarity">
    <text evidence="1">Belongs to the vitamin-B12 independent methionine synthase family.</text>
</comment>
<reference key="1">
    <citation type="journal article" date="2007" name="Nat. Biotechnol.">
        <title>Comparative analysis of the complete genome sequence of the plant growth-promoting bacterium Bacillus amyloliquefaciens FZB42.</title>
        <authorList>
            <person name="Chen X.H."/>
            <person name="Koumoutsi A."/>
            <person name="Scholz R."/>
            <person name="Eisenreich A."/>
            <person name="Schneider K."/>
            <person name="Heinemeyer I."/>
            <person name="Morgenstern B."/>
            <person name="Voss B."/>
            <person name="Hess W.R."/>
            <person name="Reva O."/>
            <person name="Junge H."/>
            <person name="Voigt B."/>
            <person name="Jungblut P.R."/>
            <person name="Vater J."/>
            <person name="Suessmuth R."/>
            <person name="Liesegang H."/>
            <person name="Strittmatter A."/>
            <person name="Gottschalk G."/>
            <person name="Borriss R."/>
        </authorList>
    </citation>
    <scope>NUCLEOTIDE SEQUENCE [LARGE SCALE GENOMIC DNA]</scope>
    <source>
        <strain>DSM 23117 / BGSC 10A6 / LMG 26770 / FZB42</strain>
    </source>
</reference>
<name>METE_BACVZ</name>
<feature type="chain" id="PRO_1000017219" description="5-methyltetrahydropteroyltriglutamate--homocysteine methyltransferase">
    <location>
        <begin position="1"/>
        <end position="762"/>
    </location>
</feature>
<feature type="active site" description="Proton donor" evidence="1">
    <location>
        <position position="698"/>
    </location>
</feature>
<feature type="binding site" evidence="1">
    <location>
        <begin position="18"/>
        <end position="21"/>
    </location>
    <ligand>
        <name>5-methyltetrahydropteroyltri-L-glutamate</name>
        <dbReference type="ChEBI" id="CHEBI:58207"/>
    </ligand>
</feature>
<feature type="binding site" evidence="1">
    <location>
        <position position="112"/>
    </location>
    <ligand>
        <name>5-methyltetrahydropteroyltri-L-glutamate</name>
        <dbReference type="ChEBI" id="CHEBI:58207"/>
    </ligand>
</feature>
<feature type="binding site" evidence="1">
    <location>
        <begin position="435"/>
        <end position="437"/>
    </location>
    <ligand>
        <name>L-homocysteine</name>
        <dbReference type="ChEBI" id="CHEBI:58199"/>
    </ligand>
</feature>
<feature type="binding site" evidence="1">
    <location>
        <begin position="435"/>
        <end position="437"/>
    </location>
    <ligand>
        <name>L-methionine</name>
        <dbReference type="ChEBI" id="CHEBI:57844"/>
    </ligand>
</feature>
<feature type="binding site" evidence="1">
    <location>
        <position position="488"/>
    </location>
    <ligand>
        <name>L-homocysteine</name>
        <dbReference type="ChEBI" id="CHEBI:58199"/>
    </ligand>
</feature>
<feature type="binding site" evidence="1">
    <location>
        <position position="488"/>
    </location>
    <ligand>
        <name>L-methionine</name>
        <dbReference type="ChEBI" id="CHEBI:57844"/>
    </ligand>
</feature>
<feature type="binding site" evidence="1">
    <location>
        <begin position="519"/>
        <end position="520"/>
    </location>
    <ligand>
        <name>5-methyltetrahydropteroyltri-L-glutamate</name>
        <dbReference type="ChEBI" id="CHEBI:58207"/>
    </ligand>
</feature>
<feature type="binding site" evidence="1">
    <location>
        <position position="565"/>
    </location>
    <ligand>
        <name>5-methyltetrahydropteroyltri-L-glutamate</name>
        <dbReference type="ChEBI" id="CHEBI:58207"/>
    </ligand>
</feature>
<feature type="binding site" evidence="1">
    <location>
        <position position="603"/>
    </location>
    <ligand>
        <name>L-homocysteine</name>
        <dbReference type="ChEBI" id="CHEBI:58199"/>
    </ligand>
</feature>
<feature type="binding site" evidence="1">
    <location>
        <position position="603"/>
    </location>
    <ligand>
        <name>L-methionine</name>
        <dbReference type="ChEBI" id="CHEBI:57844"/>
    </ligand>
</feature>
<feature type="binding site" evidence="1">
    <location>
        <position position="609"/>
    </location>
    <ligand>
        <name>5-methyltetrahydropteroyltri-L-glutamate</name>
        <dbReference type="ChEBI" id="CHEBI:58207"/>
    </ligand>
</feature>
<feature type="binding site" evidence="1">
    <location>
        <position position="645"/>
    </location>
    <ligand>
        <name>Zn(2+)</name>
        <dbReference type="ChEBI" id="CHEBI:29105"/>
        <note>catalytic</note>
    </ligand>
</feature>
<feature type="binding site" evidence="1">
    <location>
        <position position="647"/>
    </location>
    <ligand>
        <name>Zn(2+)</name>
        <dbReference type="ChEBI" id="CHEBI:29105"/>
        <note>catalytic</note>
    </ligand>
</feature>
<feature type="binding site" evidence="1">
    <location>
        <position position="669"/>
    </location>
    <ligand>
        <name>Zn(2+)</name>
        <dbReference type="ChEBI" id="CHEBI:29105"/>
        <note>catalytic</note>
    </ligand>
</feature>
<feature type="binding site" evidence="1">
    <location>
        <position position="730"/>
    </location>
    <ligand>
        <name>Zn(2+)</name>
        <dbReference type="ChEBI" id="CHEBI:29105"/>
        <note>catalytic</note>
    </ligand>
</feature>
<proteinExistence type="inferred from homology"/>
<gene>
    <name evidence="1" type="primary">metE</name>
    <name type="ordered locus">RBAM_013040</name>
</gene>
<accession>A7Z3U1</accession>
<organism>
    <name type="scientific">Bacillus velezensis (strain DSM 23117 / BGSC 10A6 / LMG 26770 / FZB42)</name>
    <name type="common">Bacillus amyloliquefaciens subsp. plantarum</name>
    <dbReference type="NCBI Taxonomy" id="326423"/>
    <lineage>
        <taxon>Bacteria</taxon>
        <taxon>Bacillati</taxon>
        <taxon>Bacillota</taxon>
        <taxon>Bacilli</taxon>
        <taxon>Bacillales</taxon>
        <taxon>Bacillaceae</taxon>
        <taxon>Bacillus</taxon>
        <taxon>Bacillus amyloliquefaciens group</taxon>
    </lineage>
</organism>
<sequence length="762" mass="86581">MTTIKTSNLGFPRIGLNREWKKTLEAYWKGNTDKETFLKELDGLFLSAVKTQLDQHIDIVPVSDFTHYDHVLDTAVSFNWIPKRFRSITDPVDTYFAIARGVKDAVSSEMTKWFNTNYHYIVPEYDESIEFRLTRNKQLDDYRRIKEEFGAETKPVIVGPYTFVTLAKGYEESEAKAIQKRLVPLYVQLLKELEAEGVKWVQIDEPALVTASSEDVRAAKELYESITKELSGLNVLLQTYFDSVDAYEELVSYPVQGIGLDFVHDKGRNLDQLKKHGFPKDKVLAAGVIDGRNIWKIDVEERLDAALDILSHADVEELWIQPSSSLLHVPVAKHPDEHLEKDLLNGLSYAKEKLAELGVLKEGLLSGKAAVSEQIEESKAALKALKAFATGANSAQKEELNQLTEKDFSRPASFEERLALQNESLGLPLLPTTTIGSFPQSAEVRSARQKWRKKDWTDEQYQAFINAETKRWVDIQEEIGLDVLVHGEFERTDMVEYFGEKLAGFAFTKYAWVQSYGSRCVRPPVIFGDVEFIEPMTVKDTVYAQSLTEKHMKGMLTGPVTILNWSFPRVDISRKEIAFQIGLALRKEVKALEDAGIQIIQVDEPALREGLPLKTQDWDEYLTWAAEAFRLTTSSVQNETQIHTHMCYSNFEDIVDTINDLDADVITIEHSRSHGGFLEYLKEHPYVKGLGLGVYDIHSPRVPATEEIYQIIDDALEVCPTDRFWVNPDCGLKTRQQEETVAALKNMVDAAKQARKKQAQLV</sequence>